<name>BP11A_CROAD</name>
<proteinExistence type="evidence at protein level"/>
<accession>P0C7J9</accession>
<reference key="1">
    <citation type="journal article" date="2005" name="Rapid Commun. Mass Spectrom.">
        <title>Fast analysis of low molecular mass compounds present in snake venom: identification of ten new pyroglutamate-containing peptides.</title>
        <authorList>
            <person name="Wermelinger L.S."/>
            <person name="Dutra D.L."/>
            <person name="Oliveira-Carvalho A.L."/>
            <person name="Soares M.R."/>
            <person name="Bloch C. Jr."/>
            <person name="Zingali R.B."/>
        </authorList>
    </citation>
    <scope>PROTEIN SEQUENCE</scope>
    <scope>SUBCELLULAR LOCATION</scope>
    <scope>TISSUE SPECIFICITY</scope>
    <scope>MASS SPECTROMETRY</scope>
    <scope>PYROGLUTAMATE FORMATION AT GLN-1</scope>
    <source>
        <tissue>Venom</tissue>
    </source>
</reference>
<organism>
    <name type="scientific">Crotalus adamanteus</name>
    <name type="common">Eastern diamondback rattlesnake</name>
    <dbReference type="NCBI Taxonomy" id="8729"/>
    <lineage>
        <taxon>Eukaryota</taxon>
        <taxon>Metazoa</taxon>
        <taxon>Chordata</taxon>
        <taxon>Craniata</taxon>
        <taxon>Vertebrata</taxon>
        <taxon>Euteleostomi</taxon>
        <taxon>Lepidosauria</taxon>
        <taxon>Squamata</taxon>
        <taxon>Bifurcata</taxon>
        <taxon>Unidentata</taxon>
        <taxon>Episquamata</taxon>
        <taxon>Toxicofera</taxon>
        <taxon>Serpentes</taxon>
        <taxon>Colubroidea</taxon>
        <taxon>Viperidae</taxon>
        <taxon>Crotalinae</taxon>
        <taxon>Crotalus</taxon>
    </lineage>
</organism>
<feature type="peptide" id="PRO_0000335875" description="Bradykinin-potentiating peptide 11a">
    <location>
        <begin position="1"/>
        <end position="11"/>
    </location>
</feature>
<feature type="modified residue" description="Pyrrolidone carboxylic acid" evidence="2">
    <location>
        <position position="1"/>
    </location>
</feature>
<evidence type="ECO:0000250" key="1"/>
<evidence type="ECO:0000269" key="2">
    <source>
    </source>
</evidence>
<evidence type="ECO:0000305" key="3"/>
<keyword id="KW-0903">Direct protein sequencing</keyword>
<keyword id="KW-0382">Hypotensive agent</keyword>
<keyword id="KW-0481">Metalloenzyme inhibitor</keyword>
<keyword id="KW-0483">Metalloprotease inhibitor</keyword>
<keyword id="KW-0646">Protease inhibitor</keyword>
<keyword id="KW-0873">Pyrrolidone carboxylic acid</keyword>
<keyword id="KW-0964">Secreted</keyword>
<keyword id="KW-0800">Toxin</keyword>
<dbReference type="GO" id="GO:0005576">
    <property type="term" value="C:extracellular region"/>
    <property type="evidence" value="ECO:0007669"/>
    <property type="project" value="UniProtKB-SubCell"/>
</dbReference>
<dbReference type="GO" id="GO:0030414">
    <property type="term" value="F:peptidase inhibitor activity"/>
    <property type="evidence" value="ECO:0007669"/>
    <property type="project" value="UniProtKB-KW"/>
</dbReference>
<dbReference type="GO" id="GO:0090729">
    <property type="term" value="F:toxin activity"/>
    <property type="evidence" value="ECO:0007669"/>
    <property type="project" value="UniProtKB-KW"/>
</dbReference>
<dbReference type="GO" id="GO:0008217">
    <property type="term" value="P:regulation of blood pressure"/>
    <property type="evidence" value="ECO:0007669"/>
    <property type="project" value="UniProtKB-KW"/>
</dbReference>
<comment type="function">
    <text evidence="1">This peptide both inhibits the activity of the angiotensin-converting enzyme (ACE) and enhances the action of bradykinin by inhibiting the peptidases that inactivate it. It acts as an indirect hypotensive agent (By similarity).</text>
</comment>
<comment type="subcellular location">
    <subcellularLocation>
        <location evidence="2">Secreted</location>
    </subcellularLocation>
</comment>
<comment type="tissue specificity">
    <text evidence="2">Expressed by the venom gland.</text>
</comment>
<comment type="mass spectrometry"/>
<comment type="similarity">
    <text evidence="3">Belongs to the bradykinin-potentiating peptide family.</text>
</comment>
<protein>
    <recommendedName>
        <fullName>Bradykinin-potentiating peptide 11a</fullName>
        <shortName>BPP-11a</shortName>
    </recommendedName>
</protein>
<sequence>QQWPPGHHIPP</sequence>